<feature type="transit peptide" description="Chloroplast" evidence="1">
    <location>
        <begin position="1"/>
        <end position="48"/>
    </location>
</feature>
<feature type="chain" id="PRO_0000439382" description="Thioredoxin-like fold domain-containing protein MRL7L, chloroplastic">
    <location>
        <begin position="49"/>
        <end position="350"/>
    </location>
</feature>
<feature type="region of interest" description="Disordered" evidence="2">
    <location>
        <begin position="78"/>
        <end position="107"/>
    </location>
</feature>
<feature type="region of interest" description="Disordered" evidence="2">
    <location>
        <begin position="182"/>
        <end position="201"/>
    </location>
</feature>
<feature type="compositionally biased region" description="Acidic residues" evidence="2">
    <location>
        <begin position="82"/>
        <end position="93"/>
    </location>
</feature>
<feature type="compositionally biased region" description="Acidic residues" evidence="2">
    <location>
        <begin position="186"/>
        <end position="200"/>
    </location>
</feature>
<feature type="sequence conflict" description="In Ref. 3; AAO89195." evidence="9" ref="3">
    <original>S</original>
    <variation>P</variation>
    <location>
        <position position="22"/>
    </location>
</feature>
<feature type="helix" evidence="11">
    <location>
        <begin position="219"/>
        <end position="221"/>
    </location>
</feature>
<feature type="helix" evidence="11">
    <location>
        <begin position="222"/>
        <end position="226"/>
    </location>
</feature>
<feature type="strand" evidence="11">
    <location>
        <begin position="233"/>
        <end position="238"/>
    </location>
</feature>
<feature type="strand" evidence="11">
    <location>
        <begin position="240"/>
        <end position="242"/>
    </location>
</feature>
<feature type="helix" evidence="11">
    <location>
        <begin position="246"/>
        <end position="264"/>
    </location>
</feature>
<feature type="strand" evidence="11">
    <location>
        <begin position="270"/>
        <end position="275"/>
    </location>
</feature>
<feature type="turn" evidence="11">
    <location>
        <begin position="276"/>
        <end position="278"/>
    </location>
</feature>
<feature type="helix" evidence="11">
    <location>
        <begin position="280"/>
        <end position="286"/>
    </location>
</feature>
<feature type="strand" evidence="11">
    <location>
        <begin position="290"/>
        <end position="297"/>
    </location>
</feature>
<feature type="strand" evidence="11">
    <location>
        <begin position="299"/>
        <end position="306"/>
    </location>
</feature>
<feature type="helix" evidence="11">
    <location>
        <begin position="312"/>
        <end position="323"/>
    </location>
</feature>
<feature type="helix" evidence="11">
    <location>
        <begin position="330"/>
        <end position="333"/>
    </location>
</feature>
<reference key="1">
    <citation type="journal article" date="1999" name="Nature">
        <title>Sequence and analysis of chromosome 2 of the plant Arabidopsis thaliana.</title>
        <authorList>
            <person name="Lin X."/>
            <person name="Kaul S."/>
            <person name="Rounsley S.D."/>
            <person name="Shea T.P."/>
            <person name="Benito M.-I."/>
            <person name="Town C.D."/>
            <person name="Fujii C.Y."/>
            <person name="Mason T.M."/>
            <person name="Bowman C.L."/>
            <person name="Barnstead M.E."/>
            <person name="Feldblyum T.V."/>
            <person name="Buell C.R."/>
            <person name="Ketchum K.A."/>
            <person name="Lee J.J."/>
            <person name="Ronning C.M."/>
            <person name="Koo H.L."/>
            <person name="Moffat K.S."/>
            <person name="Cronin L.A."/>
            <person name="Shen M."/>
            <person name="Pai G."/>
            <person name="Van Aken S."/>
            <person name="Umayam L."/>
            <person name="Tallon L.J."/>
            <person name="Gill J.E."/>
            <person name="Adams M.D."/>
            <person name="Carrera A.J."/>
            <person name="Creasy T.H."/>
            <person name="Goodman H.M."/>
            <person name="Somerville C.R."/>
            <person name="Copenhaver G.P."/>
            <person name="Preuss D."/>
            <person name="Nierman W.C."/>
            <person name="White O."/>
            <person name="Eisen J.A."/>
            <person name="Salzberg S.L."/>
            <person name="Fraser C.M."/>
            <person name="Venter J.C."/>
        </authorList>
    </citation>
    <scope>NUCLEOTIDE SEQUENCE [LARGE SCALE GENOMIC DNA]</scope>
    <source>
        <strain>cv. Columbia</strain>
    </source>
</reference>
<reference key="2">
    <citation type="journal article" date="2017" name="Plant J.">
        <title>Araport11: a complete reannotation of the Arabidopsis thaliana reference genome.</title>
        <authorList>
            <person name="Cheng C.Y."/>
            <person name="Krishnakumar V."/>
            <person name="Chan A.P."/>
            <person name="Thibaud-Nissen F."/>
            <person name="Schobel S."/>
            <person name="Town C.D."/>
        </authorList>
    </citation>
    <scope>GENOME REANNOTATION</scope>
    <source>
        <strain>cv. Columbia</strain>
    </source>
</reference>
<reference key="3">
    <citation type="journal article" date="2002" name="Plant Physiol.">
        <title>Cloning and sequencing of cDNAs for hypothetical genes from chromosome 2 of Arabidopsis.</title>
        <authorList>
            <person name="Xiao Y.-L."/>
            <person name="Malik M."/>
            <person name="Whitelaw C.A."/>
            <person name="Town C.D."/>
        </authorList>
    </citation>
    <scope>NUCLEOTIDE SEQUENCE [LARGE SCALE MRNA]</scope>
    <source>
        <strain>cv. Columbia</strain>
    </source>
</reference>
<reference key="4">
    <citation type="journal article" date="2011" name="Plant Cell Physiol.">
        <title>Two novel proteins, MRL7 and its paralog MRL7-L, have essential but functionally distinct roles in chloroplast development and are involved in plastid gene expression regulation in Arabidopsis.</title>
        <authorList>
            <person name="Qiao J."/>
            <person name="Ma C."/>
            <person name="Wimmelbacher M."/>
            <person name="Boernke F."/>
            <person name="Luo M."/>
        </authorList>
    </citation>
    <scope>FUNCTION</scope>
    <scope>SUBCELLULAR LOCATION</scope>
</reference>
<reference key="5">
    <citation type="journal article" date="2014" name="Physiol. Plantarum">
        <title>SVR4 (suppressor of variegation 4) and SVR4-like: two proteins with a role in proper organization of the chloroplast genetic machinery.</title>
        <authorList>
            <person name="Powikrowska M."/>
            <person name="Khrouchtchova A."/>
            <person name="Martens H.J."/>
            <person name="Zygadlo-Nielsen A."/>
            <person name="Melonek J."/>
            <person name="Schulz A."/>
            <person name="Krupinska K."/>
            <person name="Rodermel S."/>
            <person name="Jensen P.E."/>
        </authorList>
    </citation>
    <scope>FUNCTION</scope>
    <scope>SUBCELLULAR LOCATION</scope>
    <scope>DISRUPTION PHENOTYPE</scope>
</reference>
<reference key="6">
    <citation type="journal article" date="2019" name="Nat. Commun.">
        <title>NCP activates chloroplast transcription by controlling phytochrome-dependent dual nuclear and plastidial switches.</title>
        <authorList>
            <person name="Yang E.J."/>
            <person name="Yoo C.Y."/>
            <person name="Liu J."/>
            <person name="Wang H."/>
            <person name="Cao J."/>
            <person name="Li F.W."/>
            <person name="Pryer K.M."/>
            <person name="Sun T.P."/>
            <person name="Weigel D."/>
            <person name="Zhou P."/>
            <person name="Chen M."/>
        </authorList>
    </citation>
    <scope>STRUCTURE BY NMR OF 208-350</scope>
    <scope>FUNCTION</scope>
    <scope>SUBCELLULAR LOCATION</scope>
    <scope>DISRUPTION PHENOTYPE</scope>
</reference>
<gene>
    <name evidence="6" type="primary">MRL7L</name>
    <name evidence="8" type="synonym">NCP</name>
    <name evidence="7" type="synonym">SVR4L</name>
    <name evidence="10" type="ordered locus">At2g31840</name>
</gene>
<sequence>MILPFSTQFTCPVQDNGFSPSSLLSHCKRDRFEVTSLRYDSFGSVKTASSSKWNVMRSRRNVKAFGLVDKLGKKVWRKKEEDSDSEDEEDEVKEETFGGKEASLDDPVERREWRKTIREVIDKHPDIEEDEEIDMVEKRRKMQKLLADYPLVVNEEDPNWPEDADGWGFSFNQFFNKITIKNEKKEEEDDDEDSEGDDSEKEIVWQDDNYIRPIKDLTTAEWEEAVFKDISPLMVLVHNRYKRPKENEKFREELEKAIQVIWNCGLPSPRCVAVDAVVETDLVSALKVSVFPEIIFTKAGKILYREKGIRTADELSKIMAFFYYGAAKPPCLNGVVNSQEQIPLVDVSVN</sequence>
<protein>
    <recommendedName>
        <fullName evidence="9">Thioredoxin-like fold domain-containing protein MRL7L, chloroplastic</fullName>
    </recommendedName>
    <alternativeName>
        <fullName evidence="6">Protein MESOPHYLL-CELL RNAI LIBRARY LINE 7-LIKE</fullName>
        <shortName evidence="6">AtMRL7-L</shortName>
    </alternativeName>
    <alternativeName>
        <fullName evidence="8">Protein NUCLEAR CONTROL OF PEP ACTIVITY</fullName>
    </alternativeName>
    <alternativeName>
        <fullName evidence="7">Protein SUPPRESSOR OF VARIEGATION 4-LIKE</fullName>
    </alternativeName>
</protein>
<accession>Q9SKB6</accession>
<accession>Q84RF5</accession>
<name>MRL7L_ARATH</name>
<proteinExistence type="evidence at protein level"/>
<comment type="function">
    <text evidence="3 4 5">Plays an essential role in early steps of chloroplast development (PubMed:21515910, PubMed:24111559). Involved in the regulation of plastid gene expression (PubMed:21515910, PubMed:24111559). Required for the proper function of the plastid transcriptional machinery and protein accumulation in thylakoid membranes (PubMed:21515910, PubMed:24111559). May function as molecular chaperone to ensure proper organization of the nucleoids in chloroplasts (PubMed:21515910, PubMed:24111559). Is a necessary component of phytochrome signaling for photosynthesis-associated plastid-encoded genes (PhAPGs) activation (PubMed:31201314). Mediates the degradation of two repressors of chloroplast biogenesis, PIF1 and PIF3 in nucleus (PubMed:31201314). Promotes the assembly of the plastid-encoded RNA polymerase (PEP) complex for PhAPG transcription in plastids (PubMed:31201314).</text>
</comment>
<comment type="subcellular location">
    <subcellularLocation>
        <location evidence="3 4 5">Plastid</location>
        <location evidence="3 4 5">Chloroplast stroma</location>
    </subcellularLocation>
    <subcellularLocation>
        <location evidence="5">Nucleus</location>
    </subcellularLocation>
</comment>
<comment type="disruption phenotype">
    <text evidence="4">Seedling lethality due to deficiency in chloroplast development.</text>
</comment>
<organism>
    <name type="scientific">Arabidopsis thaliana</name>
    <name type="common">Mouse-ear cress</name>
    <dbReference type="NCBI Taxonomy" id="3702"/>
    <lineage>
        <taxon>Eukaryota</taxon>
        <taxon>Viridiplantae</taxon>
        <taxon>Streptophyta</taxon>
        <taxon>Embryophyta</taxon>
        <taxon>Tracheophyta</taxon>
        <taxon>Spermatophyta</taxon>
        <taxon>Magnoliopsida</taxon>
        <taxon>eudicotyledons</taxon>
        <taxon>Gunneridae</taxon>
        <taxon>Pentapetalae</taxon>
        <taxon>rosids</taxon>
        <taxon>malvids</taxon>
        <taxon>Brassicales</taxon>
        <taxon>Brassicaceae</taxon>
        <taxon>Camelineae</taxon>
        <taxon>Arabidopsis</taxon>
    </lineage>
</organism>
<keyword id="KW-0002">3D-structure</keyword>
<keyword id="KW-0150">Chloroplast</keyword>
<keyword id="KW-0539">Nucleus</keyword>
<keyword id="KW-0934">Plastid</keyword>
<keyword id="KW-1185">Reference proteome</keyword>
<keyword id="KW-0809">Transit peptide</keyword>
<dbReference type="EMBL" id="AC006533">
    <property type="protein sequence ID" value="AAD32288.1"/>
    <property type="molecule type" value="Genomic_DNA"/>
</dbReference>
<dbReference type="EMBL" id="CP002685">
    <property type="protein sequence ID" value="AEC08592.1"/>
    <property type="molecule type" value="Genomic_DNA"/>
</dbReference>
<dbReference type="EMBL" id="CP002685">
    <property type="protein sequence ID" value="ANM62918.1"/>
    <property type="molecule type" value="Genomic_DNA"/>
</dbReference>
<dbReference type="EMBL" id="AY247801">
    <property type="protein sequence ID" value="AAO89195.1"/>
    <property type="molecule type" value="mRNA"/>
</dbReference>
<dbReference type="PIR" id="G84725">
    <property type="entry name" value="G84725"/>
</dbReference>
<dbReference type="PDB" id="6NE8">
    <property type="method" value="NMR"/>
    <property type="chains" value="A=208-350"/>
</dbReference>
<dbReference type="PDBsum" id="6NE8"/>
<dbReference type="SMR" id="Q9SKB6"/>
<dbReference type="FunCoup" id="Q9SKB6">
    <property type="interactions" value="925"/>
</dbReference>
<dbReference type="STRING" id="3702.Q9SKB6"/>
<dbReference type="iPTMnet" id="Q9SKB6"/>
<dbReference type="PaxDb" id="3702-AT2G31840.1"/>
<dbReference type="ProteomicsDB" id="250861"/>
<dbReference type="EnsemblPlants" id="AT2G31840.1">
    <property type="protein sequence ID" value="AT2G31840.1"/>
    <property type="gene ID" value="AT2G31840"/>
</dbReference>
<dbReference type="EnsemblPlants" id="AT2G31840.2">
    <property type="protein sequence ID" value="AT2G31840.2"/>
    <property type="gene ID" value="AT2G31840"/>
</dbReference>
<dbReference type="Gramene" id="AT2G31840.1">
    <property type="protein sequence ID" value="AT2G31840.1"/>
    <property type="gene ID" value="AT2G31840"/>
</dbReference>
<dbReference type="Gramene" id="AT2G31840.2">
    <property type="protein sequence ID" value="AT2G31840.2"/>
    <property type="gene ID" value="AT2G31840"/>
</dbReference>
<dbReference type="KEGG" id="ath:AT2G31840"/>
<dbReference type="Araport" id="AT2G31840"/>
<dbReference type="TAIR" id="AT2G31840">
    <property type="gene designation" value="MRL7-L"/>
</dbReference>
<dbReference type="eggNOG" id="ENOG502QPQP">
    <property type="taxonomic scope" value="Eukaryota"/>
</dbReference>
<dbReference type="HOGENOM" id="CLU_072426_0_1_1"/>
<dbReference type="InParanoid" id="Q9SKB6"/>
<dbReference type="OMA" id="IHIIWNC"/>
<dbReference type="PhylomeDB" id="Q9SKB6"/>
<dbReference type="PRO" id="PR:Q9SKB6"/>
<dbReference type="Proteomes" id="UP000006548">
    <property type="component" value="Chromosome 2"/>
</dbReference>
<dbReference type="ExpressionAtlas" id="Q9SKB6">
    <property type="expression patterns" value="baseline and differential"/>
</dbReference>
<dbReference type="GO" id="GO:0009570">
    <property type="term" value="C:chloroplast stroma"/>
    <property type="evidence" value="ECO:0000314"/>
    <property type="project" value="TAIR"/>
</dbReference>
<dbReference type="GO" id="GO:0005634">
    <property type="term" value="C:nucleus"/>
    <property type="evidence" value="ECO:0007669"/>
    <property type="project" value="UniProtKB-SubCell"/>
</dbReference>
<dbReference type="GO" id="GO:0009658">
    <property type="term" value="P:chloroplast organization"/>
    <property type="evidence" value="ECO:0000315"/>
    <property type="project" value="TAIR"/>
</dbReference>
<dbReference type="GO" id="GO:0006355">
    <property type="term" value="P:regulation of DNA-templated transcription"/>
    <property type="evidence" value="ECO:0000315"/>
    <property type="project" value="TAIR"/>
</dbReference>
<dbReference type="Gene3D" id="3.40.30.10">
    <property type="entry name" value="Glutaredoxin"/>
    <property type="match status" value="1"/>
</dbReference>
<dbReference type="InterPro" id="IPR044701">
    <property type="entry name" value="MRL7/MRL7L"/>
</dbReference>
<dbReference type="InterPro" id="IPR036249">
    <property type="entry name" value="Thioredoxin-like_sf"/>
</dbReference>
<dbReference type="PANTHER" id="PTHR34669">
    <property type="entry name" value="THIOREDOXIN-LIKE FOLD DOMAIN-CONTAINING PROTEIN MRL7L, CHLOROPLASTIC"/>
    <property type="match status" value="1"/>
</dbReference>
<dbReference type="PANTHER" id="PTHR34669:SF1">
    <property type="entry name" value="THIOREDOXIN-LIKE FOLD DOMAIN-CONTAINING PROTEIN MRL7L, CHLOROPLASTIC"/>
    <property type="match status" value="1"/>
</dbReference>
<dbReference type="SUPFAM" id="SSF52833">
    <property type="entry name" value="Thioredoxin-like"/>
    <property type="match status" value="1"/>
</dbReference>
<evidence type="ECO:0000255" key="1"/>
<evidence type="ECO:0000256" key="2">
    <source>
        <dbReference type="SAM" id="MobiDB-lite"/>
    </source>
</evidence>
<evidence type="ECO:0000269" key="3">
    <source>
    </source>
</evidence>
<evidence type="ECO:0000269" key="4">
    <source>
    </source>
</evidence>
<evidence type="ECO:0000269" key="5">
    <source>
    </source>
</evidence>
<evidence type="ECO:0000303" key="6">
    <source>
    </source>
</evidence>
<evidence type="ECO:0000303" key="7">
    <source>
    </source>
</evidence>
<evidence type="ECO:0000303" key="8">
    <source>
    </source>
</evidence>
<evidence type="ECO:0000305" key="9"/>
<evidence type="ECO:0000312" key="10">
    <source>
        <dbReference type="Araport" id="AT2G31840"/>
    </source>
</evidence>
<evidence type="ECO:0007829" key="11">
    <source>
        <dbReference type="PDB" id="6NE8"/>
    </source>
</evidence>